<protein>
    <recommendedName>
        <fullName evidence="1">Phosphoribosylaminoimidazole-succinocarboxamide synthase</fullName>
        <ecNumber evidence="1">6.3.2.6</ecNumber>
    </recommendedName>
    <alternativeName>
        <fullName evidence="1">SAICAR synthetase</fullName>
    </alternativeName>
</protein>
<organism>
    <name type="scientific">Psychromonas ingrahamii (strain DSM 17664 / CCUG 51855 / 37)</name>
    <dbReference type="NCBI Taxonomy" id="357804"/>
    <lineage>
        <taxon>Bacteria</taxon>
        <taxon>Pseudomonadati</taxon>
        <taxon>Pseudomonadota</taxon>
        <taxon>Gammaproteobacteria</taxon>
        <taxon>Alteromonadales</taxon>
        <taxon>Psychromonadaceae</taxon>
        <taxon>Psychromonas</taxon>
    </lineage>
</organism>
<gene>
    <name evidence="1" type="primary">purC</name>
    <name type="ordered locus">Ping_1862</name>
</gene>
<accession>A1SVX4</accession>
<name>PUR7_PSYIN</name>
<proteinExistence type="inferred from homology"/>
<dbReference type="EC" id="6.3.2.6" evidence="1"/>
<dbReference type="EMBL" id="CP000510">
    <property type="protein sequence ID" value="ABM03639.1"/>
    <property type="molecule type" value="Genomic_DNA"/>
</dbReference>
<dbReference type="RefSeq" id="WP_011770199.1">
    <property type="nucleotide sequence ID" value="NC_008709.1"/>
</dbReference>
<dbReference type="SMR" id="A1SVX4"/>
<dbReference type="STRING" id="357804.Ping_1862"/>
<dbReference type="KEGG" id="pin:Ping_1862"/>
<dbReference type="eggNOG" id="COG0152">
    <property type="taxonomic scope" value="Bacteria"/>
</dbReference>
<dbReference type="HOGENOM" id="CLU_064197_0_0_6"/>
<dbReference type="OrthoDB" id="9801549at2"/>
<dbReference type="UniPathway" id="UPA00074">
    <property type="reaction ID" value="UER00131"/>
</dbReference>
<dbReference type="Proteomes" id="UP000000639">
    <property type="component" value="Chromosome"/>
</dbReference>
<dbReference type="GO" id="GO:0005737">
    <property type="term" value="C:cytoplasm"/>
    <property type="evidence" value="ECO:0007669"/>
    <property type="project" value="TreeGrafter"/>
</dbReference>
<dbReference type="GO" id="GO:0005524">
    <property type="term" value="F:ATP binding"/>
    <property type="evidence" value="ECO:0007669"/>
    <property type="project" value="UniProtKB-KW"/>
</dbReference>
<dbReference type="GO" id="GO:0004639">
    <property type="term" value="F:phosphoribosylaminoimidazolesuccinocarboxamide synthase activity"/>
    <property type="evidence" value="ECO:0007669"/>
    <property type="project" value="UniProtKB-UniRule"/>
</dbReference>
<dbReference type="GO" id="GO:0006189">
    <property type="term" value="P:'de novo' IMP biosynthetic process"/>
    <property type="evidence" value="ECO:0007669"/>
    <property type="project" value="UniProtKB-UniRule"/>
</dbReference>
<dbReference type="CDD" id="cd01414">
    <property type="entry name" value="SAICAR_synt_Sc"/>
    <property type="match status" value="1"/>
</dbReference>
<dbReference type="Gene3D" id="3.30.470.20">
    <property type="entry name" value="ATP-grasp fold, B domain"/>
    <property type="match status" value="1"/>
</dbReference>
<dbReference type="Gene3D" id="3.30.200.20">
    <property type="entry name" value="Phosphorylase Kinase, domain 1"/>
    <property type="match status" value="1"/>
</dbReference>
<dbReference type="HAMAP" id="MF_00137">
    <property type="entry name" value="SAICAR_synth"/>
    <property type="match status" value="1"/>
</dbReference>
<dbReference type="InterPro" id="IPR028923">
    <property type="entry name" value="SAICAR_synt/ADE2_N"/>
</dbReference>
<dbReference type="InterPro" id="IPR014106">
    <property type="entry name" value="SAICAR_synthase_Vibrio-typ"/>
</dbReference>
<dbReference type="NCBIfam" id="NF010567">
    <property type="entry name" value="PRK13960.1"/>
    <property type="match status" value="1"/>
</dbReference>
<dbReference type="NCBIfam" id="TIGR02735">
    <property type="entry name" value="purC_vibrio"/>
    <property type="match status" value="1"/>
</dbReference>
<dbReference type="PANTHER" id="PTHR43700">
    <property type="entry name" value="PHOSPHORIBOSYLAMINOIMIDAZOLE-SUCCINOCARBOXAMIDE SYNTHASE"/>
    <property type="match status" value="1"/>
</dbReference>
<dbReference type="PANTHER" id="PTHR43700:SF1">
    <property type="entry name" value="PHOSPHORIBOSYLAMINOIMIDAZOLE-SUCCINOCARBOXAMIDE SYNTHASE"/>
    <property type="match status" value="1"/>
</dbReference>
<dbReference type="Pfam" id="PF01259">
    <property type="entry name" value="SAICAR_synt"/>
    <property type="match status" value="1"/>
</dbReference>
<dbReference type="SUPFAM" id="SSF56104">
    <property type="entry name" value="SAICAR synthase-like"/>
    <property type="match status" value="1"/>
</dbReference>
<sequence length="367" mass="40972">MSLADKVLAVNNDLPIRSTQPVHSGKVRSVYWLTESDSRRLIAEKGYNVAADAPLAIMVISDRISAFDCIWHAEGGMNGVPGKGAALNAISNHWFKLFKDQGLADSHILDIPHPLVWIVQKARPVMIEAICRQYITGSMWRAYEKGEREFCGIEIADGLKKDQKLPELLTTPSTKGILEGIPGVAAVDDVNITRQNIEDNFAAFNFTTTQDIALYEKLLKEGFNVISHELAKIGQIFVDTKFEFGYVKDKAGNEKLIYMDEVGTPDSSRIWDAAEYQKGNIVENSKEDFRQLLLNHFPDPDILLNKDRMAERSDLAKNNALPAAVLMKISATYISIAEKIIGHKITLSDNPKAEIIEILDRQYGLID</sequence>
<comment type="catalytic activity">
    <reaction evidence="1">
        <text>5-amino-1-(5-phospho-D-ribosyl)imidazole-4-carboxylate + L-aspartate + ATP = (2S)-2-[5-amino-1-(5-phospho-beta-D-ribosyl)imidazole-4-carboxamido]succinate + ADP + phosphate + 2 H(+)</text>
        <dbReference type="Rhea" id="RHEA:22628"/>
        <dbReference type="ChEBI" id="CHEBI:15378"/>
        <dbReference type="ChEBI" id="CHEBI:29991"/>
        <dbReference type="ChEBI" id="CHEBI:30616"/>
        <dbReference type="ChEBI" id="CHEBI:43474"/>
        <dbReference type="ChEBI" id="CHEBI:58443"/>
        <dbReference type="ChEBI" id="CHEBI:77657"/>
        <dbReference type="ChEBI" id="CHEBI:456216"/>
        <dbReference type="EC" id="6.3.2.6"/>
    </reaction>
</comment>
<comment type="pathway">
    <text evidence="1">Purine metabolism; IMP biosynthesis via de novo pathway; 5-amino-1-(5-phospho-D-ribosyl)imidazole-4-carboxamide from 5-amino-1-(5-phospho-D-ribosyl)imidazole-4-carboxylate: step 1/2.</text>
</comment>
<comment type="similarity">
    <text evidence="1">Belongs to the SAICAR synthetase family.</text>
</comment>
<evidence type="ECO:0000255" key="1">
    <source>
        <dbReference type="HAMAP-Rule" id="MF_00137"/>
    </source>
</evidence>
<keyword id="KW-0067">ATP-binding</keyword>
<keyword id="KW-0436">Ligase</keyword>
<keyword id="KW-0547">Nucleotide-binding</keyword>
<keyword id="KW-0658">Purine biosynthesis</keyword>
<keyword id="KW-1185">Reference proteome</keyword>
<reference key="1">
    <citation type="journal article" date="2008" name="BMC Genomics">
        <title>Genomics of an extreme psychrophile, Psychromonas ingrahamii.</title>
        <authorList>
            <person name="Riley M."/>
            <person name="Staley J.T."/>
            <person name="Danchin A."/>
            <person name="Wang T.Z."/>
            <person name="Brettin T.S."/>
            <person name="Hauser L.J."/>
            <person name="Land M.L."/>
            <person name="Thompson L.S."/>
        </authorList>
    </citation>
    <scope>NUCLEOTIDE SEQUENCE [LARGE SCALE GENOMIC DNA]</scope>
    <source>
        <strain>DSM 17664 / CCUG 51855 / 37</strain>
    </source>
</reference>
<feature type="chain" id="PRO_1000117841" description="Phosphoribosylaminoimidazole-succinocarboxamide synthase">
    <location>
        <begin position="1"/>
        <end position="367"/>
    </location>
</feature>